<dbReference type="EC" id="2.3.1.129" evidence="1"/>
<dbReference type="EMBL" id="CP000744">
    <property type="protein sequence ID" value="ABR84073.1"/>
    <property type="molecule type" value="Genomic_DNA"/>
</dbReference>
<dbReference type="RefSeq" id="WP_003092373.1">
    <property type="nucleotide sequence ID" value="NC_009656.1"/>
</dbReference>
<dbReference type="PDB" id="5DEM">
    <property type="method" value="X-ray"/>
    <property type="resolution" value="1.81 A"/>
    <property type="chains" value="A/B/C/D/E/F=1-258"/>
</dbReference>
<dbReference type="PDB" id="5DEP">
    <property type="method" value="X-ray"/>
    <property type="resolution" value="2.16 A"/>
    <property type="chains" value="A/B/C/D/E/F=1-258"/>
</dbReference>
<dbReference type="PDB" id="5DG3">
    <property type="method" value="X-ray"/>
    <property type="resolution" value="2.30 A"/>
    <property type="chains" value="A/B/C/D/E/F=1-258"/>
</dbReference>
<dbReference type="PDB" id="6UEE">
    <property type="method" value="X-ray"/>
    <property type="resolution" value="2.10 A"/>
    <property type="chains" value="A/B/C/D/E/F=1-258"/>
</dbReference>
<dbReference type="PDB" id="6UEG">
    <property type="method" value="X-ray"/>
    <property type="resolution" value="2.00 A"/>
    <property type="chains" value="A/B/C/D/E/F=1-258"/>
</dbReference>
<dbReference type="PDB" id="7OJ6">
    <property type="method" value="X-ray"/>
    <property type="resolution" value="1.84 A"/>
    <property type="chains" value="A/B/C=1-258"/>
</dbReference>
<dbReference type="PDB" id="7OJP">
    <property type="method" value="X-ray"/>
    <property type="resolution" value="2.84 A"/>
    <property type="chains" value="A/B/C/D/E/F/G/H/I/J/K/L/M/N/O/P/Q/R/S/T/U/V/W/X/Y/Z/a/b/c/d=1-258"/>
</dbReference>
<dbReference type="PDB" id="7OJQ">
    <property type="method" value="X-ray"/>
    <property type="resolution" value="1.87 A"/>
    <property type="chains" value="A/B/C=1-258"/>
</dbReference>
<dbReference type="PDB" id="7OJW">
    <property type="method" value="X-ray"/>
    <property type="resolution" value="1.72 A"/>
    <property type="chains" value="A/B/C=1-258"/>
</dbReference>
<dbReference type="PDB" id="7OJY">
    <property type="method" value="X-ray"/>
    <property type="resolution" value="2.00 A"/>
    <property type="chains" value="A/B/C=1-258"/>
</dbReference>
<dbReference type="PDB" id="7OK1">
    <property type="method" value="X-ray"/>
    <property type="resolution" value="1.92 A"/>
    <property type="chains" value="A/B/C=1-258"/>
</dbReference>
<dbReference type="PDB" id="7OK2">
    <property type="method" value="X-ray"/>
    <property type="resolution" value="2.89 A"/>
    <property type="chains" value="1/2/3/4/A/B/C/D/E/F/G/H/I/J/K/L/M/N/O/P/Q/R/S/T/U/V/W/X/Y/Z=1-258"/>
</dbReference>
<dbReference type="PDB" id="7OKA">
    <property type="method" value="X-ray"/>
    <property type="resolution" value="2.74 A"/>
    <property type="chains" value="A/B/C/D/E/F/G/H/I/J/K/L/M/N/O/P/Q/R/S/T/U/V/W/X/Y/Z/a/b/c/d=1-258"/>
</dbReference>
<dbReference type="PDB" id="7T5R">
    <property type="method" value="X-ray"/>
    <property type="resolution" value="1.95 A"/>
    <property type="chains" value="A/B/C/D/E/F=1-258"/>
</dbReference>
<dbReference type="PDB" id="7T5S">
    <property type="method" value="X-ray"/>
    <property type="resolution" value="3.00 A"/>
    <property type="chains" value="A/B/C/D/E/F=1-258"/>
</dbReference>
<dbReference type="PDB" id="7T5X">
    <property type="method" value="X-ray"/>
    <property type="resolution" value="2.20 A"/>
    <property type="chains" value="A/B/C/D/E/F=1-258"/>
</dbReference>
<dbReference type="PDB" id="7T5Z">
    <property type="method" value="X-ray"/>
    <property type="resolution" value="2.25 A"/>
    <property type="chains" value="A/B/C/D/E/F=1-258"/>
</dbReference>
<dbReference type="PDB" id="7T60">
    <property type="method" value="X-ray"/>
    <property type="resolution" value="2.00 A"/>
    <property type="chains" value="A/B/C/D/E/F=1-258"/>
</dbReference>
<dbReference type="PDB" id="7T61">
    <property type="method" value="X-ray"/>
    <property type="resolution" value="2.10 A"/>
    <property type="chains" value="A/B/C/D/E/F=1-258"/>
</dbReference>
<dbReference type="PDBsum" id="5DEM"/>
<dbReference type="PDBsum" id="5DEP"/>
<dbReference type="PDBsum" id="5DG3"/>
<dbReference type="PDBsum" id="6UEE"/>
<dbReference type="PDBsum" id="6UEG"/>
<dbReference type="PDBsum" id="7OJ6"/>
<dbReference type="PDBsum" id="7OJP"/>
<dbReference type="PDBsum" id="7OJQ"/>
<dbReference type="PDBsum" id="7OJW"/>
<dbReference type="PDBsum" id="7OJY"/>
<dbReference type="PDBsum" id="7OK1"/>
<dbReference type="PDBsum" id="7OK2"/>
<dbReference type="PDBsum" id="7OKA"/>
<dbReference type="PDBsum" id="7T5R"/>
<dbReference type="PDBsum" id="7T5S"/>
<dbReference type="PDBsum" id="7T5X"/>
<dbReference type="PDBsum" id="7T5Z"/>
<dbReference type="PDBsum" id="7T60"/>
<dbReference type="PDBsum" id="7T61"/>
<dbReference type="SMR" id="A6V1E4"/>
<dbReference type="KEGG" id="pap:PSPA7_1495"/>
<dbReference type="HOGENOM" id="CLU_061249_0_0_6"/>
<dbReference type="BRENDA" id="2.3.1.129">
    <property type="organism ID" value="5087"/>
</dbReference>
<dbReference type="UniPathway" id="UPA00359">
    <property type="reaction ID" value="UER00477"/>
</dbReference>
<dbReference type="EvolutionaryTrace" id="A6V1E4"/>
<dbReference type="Proteomes" id="UP000001582">
    <property type="component" value="Chromosome"/>
</dbReference>
<dbReference type="GO" id="GO:0005737">
    <property type="term" value="C:cytoplasm"/>
    <property type="evidence" value="ECO:0007669"/>
    <property type="project" value="UniProtKB-SubCell"/>
</dbReference>
<dbReference type="GO" id="GO:0016020">
    <property type="term" value="C:membrane"/>
    <property type="evidence" value="ECO:0007669"/>
    <property type="project" value="GOC"/>
</dbReference>
<dbReference type="GO" id="GO:0008780">
    <property type="term" value="F:acyl-[acyl-carrier-protein]-UDP-N-acetylglucosamine O-acyltransferase activity"/>
    <property type="evidence" value="ECO:0007669"/>
    <property type="project" value="UniProtKB-UniRule"/>
</dbReference>
<dbReference type="GO" id="GO:0009245">
    <property type="term" value="P:lipid A biosynthetic process"/>
    <property type="evidence" value="ECO:0007669"/>
    <property type="project" value="UniProtKB-UniRule"/>
</dbReference>
<dbReference type="CDD" id="cd03351">
    <property type="entry name" value="LbH_UDP-GlcNAc_AT"/>
    <property type="match status" value="1"/>
</dbReference>
<dbReference type="FunFam" id="1.20.1180.10:FF:000001">
    <property type="entry name" value="Acyl-[acyl-carrier-protein]--UDP-N-acetylglucosamine O-acyltransferase"/>
    <property type="match status" value="1"/>
</dbReference>
<dbReference type="FunFam" id="2.160.10.10:FF:000003">
    <property type="entry name" value="Acyl-[acyl-carrier-protein]--UDP-N-acetylglucosamine O-acyltransferase"/>
    <property type="match status" value="1"/>
</dbReference>
<dbReference type="Gene3D" id="2.160.10.10">
    <property type="entry name" value="Hexapeptide repeat proteins"/>
    <property type="match status" value="1"/>
</dbReference>
<dbReference type="Gene3D" id="1.20.1180.10">
    <property type="entry name" value="Udp N-acetylglucosamine O-acyltransferase, C-terminal domain"/>
    <property type="match status" value="1"/>
</dbReference>
<dbReference type="HAMAP" id="MF_00387">
    <property type="entry name" value="LpxA"/>
    <property type="match status" value="1"/>
</dbReference>
<dbReference type="InterPro" id="IPR029098">
    <property type="entry name" value="Acetyltransf_C"/>
</dbReference>
<dbReference type="InterPro" id="IPR037157">
    <property type="entry name" value="Acetyltransf_C_sf"/>
</dbReference>
<dbReference type="InterPro" id="IPR001451">
    <property type="entry name" value="Hexapep"/>
</dbReference>
<dbReference type="InterPro" id="IPR018357">
    <property type="entry name" value="Hexapep_transf_CS"/>
</dbReference>
<dbReference type="InterPro" id="IPR010137">
    <property type="entry name" value="Lipid_A_LpxA"/>
</dbReference>
<dbReference type="InterPro" id="IPR011004">
    <property type="entry name" value="Trimer_LpxA-like_sf"/>
</dbReference>
<dbReference type="NCBIfam" id="TIGR01852">
    <property type="entry name" value="lipid_A_lpxA"/>
    <property type="match status" value="1"/>
</dbReference>
<dbReference type="NCBIfam" id="NF003657">
    <property type="entry name" value="PRK05289.1"/>
    <property type="match status" value="1"/>
</dbReference>
<dbReference type="PANTHER" id="PTHR43480">
    <property type="entry name" value="ACYL-[ACYL-CARRIER-PROTEIN]--UDP-N-ACETYLGLUCOSAMINE O-ACYLTRANSFERASE"/>
    <property type="match status" value="1"/>
</dbReference>
<dbReference type="PANTHER" id="PTHR43480:SF1">
    <property type="entry name" value="ACYL-[ACYL-CARRIER-PROTEIN]--UDP-N-ACETYLGLUCOSAMINE O-ACYLTRANSFERASE, MITOCHONDRIAL-RELATED"/>
    <property type="match status" value="1"/>
</dbReference>
<dbReference type="Pfam" id="PF13720">
    <property type="entry name" value="Acetyltransf_11"/>
    <property type="match status" value="1"/>
</dbReference>
<dbReference type="Pfam" id="PF00132">
    <property type="entry name" value="Hexapep"/>
    <property type="match status" value="2"/>
</dbReference>
<dbReference type="PIRSF" id="PIRSF000456">
    <property type="entry name" value="UDP-GlcNAc_acltr"/>
    <property type="match status" value="1"/>
</dbReference>
<dbReference type="SUPFAM" id="SSF51161">
    <property type="entry name" value="Trimeric LpxA-like enzymes"/>
    <property type="match status" value="1"/>
</dbReference>
<dbReference type="PROSITE" id="PS00101">
    <property type="entry name" value="HEXAPEP_TRANSFERASES"/>
    <property type="match status" value="1"/>
</dbReference>
<comment type="function">
    <text evidence="1">Involved in the biosynthesis of lipid A, a phosphorylated glycolipid that anchors the lipopolysaccharide to the outer membrane of the cell.</text>
</comment>
<comment type="catalytic activity">
    <reaction evidence="1">
        <text>a (3R)-hydroxyacyl-[ACP] + UDP-N-acetyl-alpha-D-glucosamine = a UDP-3-O-[(3R)-3-hydroxyacyl]-N-acetyl-alpha-D-glucosamine + holo-[ACP]</text>
        <dbReference type="Rhea" id="RHEA:67812"/>
        <dbReference type="Rhea" id="RHEA-COMP:9685"/>
        <dbReference type="Rhea" id="RHEA-COMP:9945"/>
        <dbReference type="ChEBI" id="CHEBI:57705"/>
        <dbReference type="ChEBI" id="CHEBI:64479"/>
        <dbReference type="ChEBI" id="CHEBI:78827"/>
        <dbReference type="ChEBI" id="CHEBI:173225"/>
        <dbReference type="EC" id="2.3.1.129"/>
    </reaction>
</comment>
<comment type="pathway">
    <text evidence="1">Glycolipid biosynthesis; lipid IV(A) biosynthesis; lipid IV(A) from (3R)-3-hydroxytetradecanoyl-[acyl-carrier-protein] and UDP-N-acetyl-alpha-D-glucosamine: step 1/6.</text>
</comment>
<comment type="subunit">
    <text evidence="1">Homotrimer.</text>
</comment>
<comment type="subcellular location">
    <subcellularLocation>
        <location evidence="1">Cytoplasm</location>
    </subcellularLocation>
</comment>
<comment type="similarity">
    <text evidence="1">Belongs to the transferase hexapeptide repeat family. LpxA subfamily.</text>
</comment>
<sequence length="258" mass="28010">MSLIDPRAIIDPSARLAADVQVGPWSIVGAEVEIGEGTVIGPHVVLKGPTKIGKHNRIYQFSSVGEDTPDLKYKGEPTRLVIGDHNVIREGVTIHRGTVQDRAETTIGDHNLIMAYAHIGHDSVIGNHCILVNNTALAGHVHVDDWAILSGYTLVHQYCRIGAHSFSGMGSAIGKDVPAYVTVFGNPAEARSMNFEGMRRRGFSSEAIHALRRAYKVVYRQGHTVEEALAELAESAAQFPEVAVFRDSIQSATRGITR</sequence>
<name>LPXA_PSEP7</name>
<reference key="1">
    <citation type="submission" date="2007-06" db="EMBL/GenBank/DDBJ databases">
        <authorList>
            <person name="Dodson R.J."/>
            <person name="Harkins D."/>
            <person name="Paulsen I.T."/>
        </authorList>
    </citation>
    <scope>NUCLEOTIDE SEQUENCE [LARGE SCALE GENOMIC DNA]</scope>
    <source>
        <strain>DSM 24068 / PA7</strain>
    </source>
</reference>
<organism>
    <name type="scientific">Pseudomonas paraeruginosa (strain DSM 24068 / PA7)</name>
    <name type="common">Pseudomonas aeruginosa (strain PA7)</name>
    <dbReference type="NCBI Taxonomy" id="381754"/>
    <lineage>
        <taxon>Bacteria</taxon>
        <taxon>Pseudomonadati</taxon>
        <taxon>Pseudomonadota</taxon>
        <taxon>Gammaproteobacteria</taxon>
        <taxon>Pseudomonadales</taxon>
        <taxon>Pseudomonadaceae</taxon>
        <taxon>Pseudomonas</taxon>
        <taxon>Pseudomonas paraeruginosa</taxon>
    </lineage>
</organism>
<evidence type="ECO:0000255" key="1">
    <source>
        <dbReference type="HAMAP-Rule" id="MF_00387"/>
    </source>
</evidence>
<evidence type="ECO:0007829" key="2">
    <source>
        <dbReference type="PDB" id="5DEM"/>
    </source>
</evidence>
<protein>
    <recommendedName>
        <fullName evidence="1">Acyl-[acyl-carrier-protein]--UDP-N-acetylglucosamine O-acyltransferase</fullName>
        <shortName evidence="1">UDP-N-acetylglucosamine acyltransferase</shortName>
        <ecNumber evidence="1">2.3.1.129</ecNumber>
    </recommendedName>
</protein>
<keyword id="KW-0002">3D-structure</keyword>
<keyword id="KW-0012">Acyltransferase</keyword>
<keyword id="KW-0963">Cytoplasm</keyword>
<keyword id="KW-0441">Lipid A biosynthesis</keyword>
<keyword id="KW-0444">Lipid biosynthesis</keyword>
<keyword id="KW-0443">Lipid metabolism</keyword>
<keyword id="KW-0677">Repeat</keyword>
<keyword id="KW-0808">Transferase</keyword>
<gene>
    <name evidence="1" type="primary">lpxA</name>
    <name type="ordered locus">PSPA7_1495</name>
</gene>
<proteinExistence type="evidence at protein level"/>
<accession>A6V1E4</accession>
<feature type="chain" id="PRO_1000013171" description="Acyl-[acyl-carrier-protein]--UDP-N-acetylglucosamine O-acyltransferase">
    <location>
        <begin position="1"/>
        <end position="258"/>
    </location>
</feature>
<feature type="strand" evidence="2">
    <location>
        <begin position="8"/>
        <end position="10"/>
    </location>
</feature>
<feature type="strand" evidence="2">
    <location>
        <begin position="32"/>
        <end position="34"/>
    </location>
</feature>
<feature type="strand" evidence="2">
    <location>
        <begin position="48"/>
        <end position="52"/>
    </location>
</feature>
<feature type="strand" evidence="2">
    <location>
        <begin position="63"/>
        <end position="66"/>
    </location>
</feature>
<feature type="strand" evidence="2">
    <location>
        <begin position="69"/>
        <end position="73"/>
    </location>
</feature>
<feature type="strand" evidence="2">
    <location>
        <begin position="79"/>
        <end position="82"/>
    </location>
</feature>
<feature type="strand" evidence="2">
    <location>
        <begin position="93"/>
        <end position="95"/>
    </location>
</feature>
<feature type="turn" evidence="2">
    <location>
        <begin position="99"/>
        <end position="102"/>
    </location>
</feature>
<feature type="strand" evidence="2">
    <location>
        <begin position="103"/>
        <end position="107"/>
    </location>
</feature>
<feature type="strand" evidence="2">
    <location>
        <begin position="175"/>
        <end position="177"/>
    </location>
</feature>
<feature type="strand" evidence="2">
    <location>
        <begin position="181"/>
        <end position="184"/>
    </location>
</feature>
<feature type="turn" evidence="2">
    <location>
        <begin position="185"/>
        <end position="188"/>
    </location>
</feature>
<feature type="strand" evidence="2">
    <location>
        <begin position="189"/>
        <end position="193"/>
    </location>
</feature>
<feature type="helix" evidence="2">
    <location>
        <begin position="195"/>
        <end position="200"/>
    </location>
</feature>
<feature type="helix" evidence="2">
    <location>
        <begin position="205"/>
        <end position="219"/>
    </location>
</feature>
<feature type="helix" evidence="2">
    <location>
        <begin position="225"/>
        <end position="238"/>
    </location>
</feature>
<feature type="helix" evidence="2">
    <location>
        <begin position="240"/>
        <end position="250"/>
    </location>
</feature>